<evidence type="ECO:0000255" key="1">
    <source>
        <dbReference type="HAMAP-Rule" id="MF_00201"/>
    </source>
</evidence>
<evidence type="ECO:0000256" key="2">
    <source>
        <dbReference type="SAM" id="MobiDB-lite"/>
    </source>
</evidence>
<keyword id="KW-0227">DNA damage</keyword>
<keyword id="KW-0233">DNA recombination</keyword>
<keyword id="KW-0234">DNA repair</keyword>
<reference key="1">
    <citation type="submission" date="2007-04" db="EMBL/GenBank/DDBJ databases">
        <title>Complete sequence of Roseiflexus sp. RS-1.</title>
        <authorList>
            <consortium name="US DOE Joint Genome Institute"/>
            <person name="Copeland A."/>
            <person name="Lucas S."/>
            <person name="Lapidus A."/>
            <person name="Barry K."/>
            <person name="Detter J.C."/>
            <person name="Glavina del Rio T."/>
            <person name="Hammon N."/>
            <person name="Israni S."/>
            <person name="Dalin E."/>
            <person name="Tice H."/>
            <person name="Pitluck S."/>
            <person name="Chertkov O."/>
            <person name="Brettin T."/>
            <person name="Bruce D."/>
            <person name="Han C."/>
            <person name="Schmutz J."/>
            <person name="Larimer F."/>
            <person name="Land M."/>
            <person name="Hauser L."/>
            <person name="Kyrpides N."/>
            <person name="Mikhailova N."/>
            <person name="Bryant D.A."/>
            <person name="Richardson P."/>
        </authorList>
    </citation>
    <scope>NUCLEOTIDE SEQUENCE [LARGE SCALE GENOMIC DNA]</scope>
    <source>
        <strain>RS-1</strain>
    </source>
</reference>
<comment type="function">
    <text evidence="1">Involved in DNA repair and RecF pathway recombination.</text>
</comment>
<comment type="similarity">
    <text evidence="1">Belongs to the RecO family.</text>
</comment>
<protein>
    <recommendedName>
        <fullName evidence="1">DNA repair protein RecO</fullName>
    </recommendedName>
    <alternativeName>
        <fullName evidence="1">Recombination protein O</fullName>
    </alternativeName>
</protein>
<sequence>MRDRVYRTEAIIIRRSDAGEADRLVTILTPLGRQRVVARGARKLHSRLAGHIELFTHTMLMLAIGRNLHIVTQSSPLDRFERLRTDLERIGAAYYAAELVDRLVEEEAENKRAFSILLGTLRALNAGAAIDLTLRAYELHLLDALGYRPQLYECAACGAVLTEATNRFSPVTGGALCPDCAGVDRLALPMSLAAFKLLRYLQSQPLEISGELRISPATRAETESLLRAYLRHILERDPRSLAFLDDVRQMLRTSSPASVGSSATRYFAQGDTDENDRDPPGAR</sequence>
<proteinExistence type="inferred from homology"/>
<accession>A5USV2</accession>
<feature type="chain" id="PRO_0000325210" description="DNA repair protein RecO">
    <location>
        <begin position="1"/>
        <end position="283"/>
    </location>
</feature>
<feature type="region of interest" description="Disordered" evidence="2">
    <location>
        <begin position="254"/>
        <end position="283"/>
    </location>
</feature>
<feature type="compositionally biased region" description="Polar residues" evidence="2">
    <location>
        <begin position="254"/>
        <end position="264"/>
    </location>
</feature>
<organism>
    <name type="scientific">Roseiflexus sp. (strain RS-1)</name>
    <dbReference type="NCBI Taxonomy" id="357808"/>
    <lineage>
        <taxon>Bacteria</taxon>
        <taxon>Bacillati</taxon>
        <taxon>Chloroflexota</taxon>
        <taxon>Chloroflexia</taxon>
        <taxon>Chloroflexales</taxon>
        <taxon>Roseiflexineae</taxon>
        <taxon>Roseiflexaceae</taxon>
        <taxon>Roseiflexus</taxon>
    </lineage>
</organism>
<dbReference type="EMBL" id="CP000686">
    <property type="protein sequence ID" value="ABQ89705.1"/>
    <property type="molecule type" value="Genomic_DNA"/>
</dbReference>
<dbReference type="RefSeq" id="WP_011956057.1">
    <property type="nucleotide sequence ID" value="NC_009523.1"/>
</dbReference>
<dbReference type="SMR" id="A5USV2"/>
<dbReference type="STRING" id="357808.RoseRS_1301"/>
<dbReference type="KEGG" id="rrs:RoseRS_1301"/>
<dbReference type="eggNOG" id="COG1381">
    <property type="taxonomic scope" value="Bacteria"/>
</dbReference>
<dbReference type="HOGENOM" id="CLU_066632_1_0_0"/>
<dbReference type="OrthoDB" id="9797083at2"/>
<dbReference type="Proteomes" id="UP000006554">
    <property type="component" value="Chromosome"/>
</dbReference>
<dbReference type="GO" id="GO:0043590">
    <property type="term" value="C:bacterial nucleoid"/>
    <property type="evidence" value="ECO:0007669"/>
    <property type="project" value="TreeGrafter"/>
</dbReference>
<dbReference type="GO" id="GO:0006310">
    <property type="term" value="P:DNA recombination"/>
    <property type="evidence" value="ECO:0007669"/>
    <property type="project" value="UniProtKB-UniRule"/>
</dbReference>
<dbReference type="GO" id="GO:0006302">
    <property type="term" value="P:double-strand break repair"/>
    <property type="evidence" value="ECO:0007669"/>
    <property type="project" value="TreeGrafter"/>
</dbReference>
<dbReference type="Gene3D" id="2.40.50.140">
    <property type="entry name" value="Nucleic acid-binding proteins"/>
    <property type="match status" value="1"/>
</dbReference>
<dbReference type="Gene3D" id="1.20.1440.120">
    <property type="entry name" value="Recombination protein O, C-terminal domain"/>
    <property type="match status" value="1"/>
</dbReference>
<dbReference type="HAMAP" id="MF_00201">
    <property type="entry name" value="RecO"/>
    <property type="match status" value="1"/>
</dbReference>
<dbReference type="InterPro" id="IPR037278">
    <property type="entry name" value="ARFGAP/RecO"/>
</dbReference>
<dbReference type="InterPro" id="IPR022572">
    <property type="entry name" value="DNA_rep/recomb_RecO_N"/>
</dbReference>
<dbReference type="InterPro" id="IPR012340">
    <property type="entry name" value="NA-bd_OB-fold"/>
</dbReference>
<dbReference type="InterPro" id="IPR003717">
    <property type="entry name" value="RecO"/>
</dbReference>
<dbReference type="InterPro" id="IPR042242">
    <property type="entry name" value="RecO_C"/>
</dbReference>
<dbReference type="NCBIfam" id="TIGR00613">
    <property type="entry name" value="reco"/>
    <property type="match status" value="1"/>
</dbReference>
<dbReference type="PANTHER" id="PTHR33991">
    <property type="entry name" value="DNA REPAIR PROTEIN RECO"/>
    <property type="match status" value="1"/>
</dbReference>
<dbReference type="PANTHER" id="PTHR33991:SF1">
    <property type="entry name" value="DNA REPAIR PROTEIN RECO"/>
    <property type="match status" value="1"/>
</dbReference>
<dbReference type="Pfam" id="PF02565">
    <property type="entry name" value="RecO_C"/>
    <property type="match status" value="1"/>
</dbReference>
<dbReference type="Pfam" id="PF11967">
    <property type="entry name" value="RecO_N"/>
    <property type="match status" value="1"/>
</dbReference>
<dbReference type="SUPFAM" id="SSF57863">
    <property type="entry name" value="ArfGap/RecO-like zinc finger"/>
    <property type="match status" value="1"/>
</dbReference>
<dbReference type="SUPFAM" id="SSF50249">
    <property type="entry name" value="Nucleic acid-binding proteins"/>
    <property type="match status" value="1"/>
</dbReference>
<gene>
    <name evidence="1" type="primary">recO</name>
    <name type="ordered locus">RoseRS_1301</name>
</gene>
<name>RECO_ROSS1</name>